<organism>
    <name type="scientific">Camelus dromedarius</name>
    <name type="common">Dromedary</name>
    <name type="synonym">Arabian camel</name>
    <dbReference type="NCBI Taxonomy" id="9838"/>
    <lineage>
        <taxon>Eukaryota</taxon>
        <taxon>Metazoa</taxon>
        <taxon>Chordata</taxon>
        <taxon>Craniata</taxon>
        <taxon>Vertebrata</taxon>
        <taxon>Euteleostomi</taxon>
        <taxon>Mammalia</taxon>
        <taxon>Eutheria</taxon>
        <taxon>Laurasiatheria</taxon>
        <taxon>Artiodactyla</taxon>
        <taxon>Tylopoda</taxon>
        <taxon>Camelidae</taxon>
        <taxon>Camelus</taxon>
    </lineage>
</organism>
<feature type="chain" id="PRO_0000188984" description="Whey acidic protein">
    <location>
        <begin position="1"/>
        <end position="117"/>
    </location>
</feature>
<feature type="domain" description="WAP 1" evidence="1">
    <location>
        <begin position="4"/>
        <end position="54"/>
    </location>
</feature>
<feature type="domain" description="WAP 2" evidence="1">
    <location>
        <begin position="61"/>
        <end position="111"/>
    </location>
</feature>
<feature type="disulfide bond" evidence="1">
    <location>
        <begin position="13"/>
        <end position="41"/>
    </location>
</feature>
<feature type="disulfide bond" evidence="1">
    <location>
        <begin position="24"/>
        <end position="46"/>
    </location>
</feature>
<feature type="disulfide bond" evidence="1">
    <location>
        <begin position="28"/>
        <end position="40"/>
    </location>
</feature>
<feature type="disulfide bond" evidence="1">
    <location>
        <begin position="34"/>
        <end position="50"/>
    </location>
</feature>
<feature type="disulfide bond" evidence="1">
    <location>
        <begin position="68"/>
        <end position="99"/>
    </location>
</feature>
<feature type="disulfide bond" evidence="1">
    <location>
        <begin position="80"/>
        <end position="103"/>
    </location>
</feature>
<feature type="disulfide bond" evidence="1">
    <location>
        <begin position="86"/>
        <end position="98"/>
    </location>
</feature>
<feature type="disulfide bond" evidence="1">
    <location>
        <begin position="92"/>
        <end position="107"/>
    </location>
</feature>
<protein>
    <recommendedName>
        <fullName>Whey acidic protein</fullName>
        <shortName>WAP</shortName>
    </recommendedName>
</protein>
<gene>
    <name type="primary">WAP</name>
</gene>
<comment type="function">
    <text>Could be a protease inhibitor.</text>
</comment>
<comment type="subcellular location">
    <subcellularLocation>
        <location>Secreted</location>
    </subcellularLocation>
</comment>
<comment type="tissue specificity">
    <text>Milk-specific; major protein component of milk whey.</text>
</comment>
<dbReference type="PIR" id="A24178">
    <property type="entry name" value="A24178"/>
</dbReference>
<dbReference type="SMR" id="P09837"/>
<dbReference type="STRING" id="9838.ENSCDRP00005003493"/>
<dbReference type="MEROPS" id="I17.001"/>
<dbReference type="GO" id="GO:0005615">
    <property type="term" value="C:extracellular space"/>
    <property type="evidence" value="ECO:0007669"/>
    <property type="project" value="TreeGrafter"/>
</dbReference>
<dbReference type="GO" id="GO:0004867">
    <property type="term" value="F:serine-type endopeptidase inhibitor activity"/>
    <property type="evidence" value="ECO:0007669"/>
    <property type="project" value="TreeGrafter"/>
</dbReference>
<dbReference type="GO" id="GO:0019731">
    <property type="term" value="P:antibacterial humoral response"/>
    <property type="evidence" value="ECO:0007669"/>
    <property type="project" value="TreeGrafter"/>
</dbReference>
<dbReference type="GO" id="GO:0045087">
    <property type="term" value="P:innate immune response"/>
    <property type="evidence" value="ECO:0007669"/>
    <property type="project" value="TreeGrafter"/>
</dbReference>
<dbReference type="CDD" id="cd00199">
    <property type="entry name" value="WAP"/>
    <property type="match status" value="1"/>
</dbReference>
<dbReference type="Gene3D" id="4.10.75.10">
    <property type="entry name" value="Elafin-like"/>
    <property type="match status" value="2"/>
</dbReference>
<dbReference type="InterPro" id="IPR036645">
    <property type="entry name" value="Elafin-like_sf"/>
</dbReference>
<dbReference type="InterPro" id="IPR008197">
    <property type="entry name" value="WAP_dom"/>
</dbReference>
<dbReference type="InterPro" id="IPR050514">
    <property type="entry name" value="WAP_four-disulfide_core"/>
</dbReference>
<dbReference type="PANTHER" id="PTHR19441">
    <property type="entry name" value="WHEY ACDIC PROTEIN WAP"/>
    <property type="match status" value="1"/>
</dbReference>
<dbReference type="PANTHER" id="PTHR19441:SF27">
    <property type="entry name" value="WHEY ACIDIC PROTEIN"/>
    <property type="match status" value="1"/>
</dbReference>
<dbReference type="Pfam" id="PF00095">
    <property type="entry name" value="WAP"/>
    <property type="match status" value="2"/>
</dbReference>
<dbReference type="PRINTS" id="PR00003">
    <property type="entry name" value="4DISULPHCORE"/>
</dbReference>
<dbReference type="SMART" id="SM00217">
    <property type="entry name" value="WAP"/>
    <property type="match status" value="2"/>
</dbReference>
<dbReference type="SUPFAM" id="SSF57256">
    <property type="entry name" value="Elafin-like"/>
    <property type="match status" value="1"/>
</dbReference>
<dbReference type="PROSITE" id="PS51390">
    <property type="entry name" value="WAP"/>
    <property type="match status" value="2"/>
</dbReference>
<evidence type="ECO:0000255" key="1">
    <source>
        <dbReference type="PROSITE-ProRule" id="PRU00722"/>
    </source>
</evidence>
<accession>P09837</accession>
<sequence length="117" mass="12564">LAPALSLPGQAVCPELSSSEDNACIISCVNDESCPQGTKCCARSPCSRSCTVPLMVSSPEPVLKDGRCPWVQTPLTAKHCLEKNDCSRDDQCEGNKKCCFSSCAMRCLDPVTEDSFQ</sequence>
<name>WAP_CAMDR</name>
<keyword id="KW-0903">Direct protein sequencing</keyword>
<keyword id="KW-1015">Disulfide bond</keyword>
<keyword id="KW-0494">Milk protein</keyword>
<keyword id="KW-0646">Protease inhibitor</keyword>
<keyword id="KW-0677">Repeat</keyword>
<keyword id="KW-0964">Secreted</keyword>
<proteinExistence type="evidence at protein level"/>
<reference key="1">
    <citation type="journal article" date="1986" name="Eur. J. Biochem.">
        <title>A camel milk whey protein rich in half-cystine. Primary structure, assessment of variations, internal repeat patterns, and relationships with neurophysin and other active polypeptides.</title>
        <authorList>
            <person name="Beg O.U."/>
            <person name="von Bahr-Lindstroem H."/>
            <person name="Zaidi Z.H."/>
            <person name="Joernvall H."/>
        </authorList>
    </citation>
    <scope>PROTEIN SEQUENCE</scope>
    <source>
        <tissue>Milk</tissue>
    </source>
</reference>